<proteinExistence type="inferred from homology"/>
<reference key="1">
    <citation type="journal article" date="2001" name="Nature">
        <title>Complete genome sequence of Salmonella enterica serovar Typhimurium LT2.</title>
        <authorList>
            <person name="McClelland M."/>
            <person name="Sanderson K.E."/>
            <person name="Spieth J."/>
            <person name="Clifton S.W."/>
            <person name="Latreille P."/>
            <person name="Courtney L."/>
            <person name="Porwollik S."/>
            <person name="Ali J."/>
            <person name="Dante M."/>
            <person name="Du F."/>
            <person name="Hou S."/>
            <person name="Layman D."/>
            <person name="Leonard S."/>
            <person name="Nguyen C."/>
            <person name="Scott K."/>
            <person name="Holmes A."/>
            <person name="Grewal N."/>
            <person name="Mulvaney E."/>
            <person name="Ryan E."/>
            <person name="Sun H."/>
            <person name="Florea L."/>
            <person name="Miller W."/>
            <person name="Stoneking T."/>
            <person name="Nhan M."/>
            <person name="Waterston R."/>
            <person name="Wilson R.K."/>
        </authorList>
    </citation>
    <scope>NUCLEOTIDE SEQUENCE [LARGE SCALE GENOMIC DNA]</scope>
    <source>
        <strain>LT2 / SGSC1412 / ATCC 700720</strain>
    </source>
</reference>
<protein>
    <recommendedName>
        <fullName>Succinate dehydrogenase iron-sulfur subunit</fullName>
        <ecNumber>1.3.5.1</ecNumber>
    </recommendedName>
</protein>
<feature type="chain" id="PRO_0000158692" description="Succinate dehydrogenase iron-sulfur subunit">
    <location>
        <begin position="1"/>
        <end position="238"/>
    </location>
</feature>
<feature type="domain" description="2Fe-2S ferredoxin-type" evidence="2">
    <location>
        <begin position="1"/>
        <end position="97"/>
    </location>
</feature>
<feature type="domain" description="4Fe-4S ferredoxin-type" evidence="3">
    <location>
        <begin position="139"/>
        <end position="169"/>
    </location>
</feature>
<feature type="binding site" evidence="1">
    <location>
        <position position="55"/>
    </location>
    <ligand>
        <name>[2Fe-2S] cluster</name>
        <dbReference type="ChEBI" id="CHEBI:190135"/>
    </ligand>
</feature>
<feature type="binding site" evidence="1">
    <location>
        <position position="60"/>
    </location>
    <ligand>
        <name>[2Fe-2S] cluster</name>
        <dbReference type="ChEBI" id="CHEBI:190135"/>
    </ligand>
</feature>
<feature type="binding site" evidence="1">
    <location>
        <position position="75"/>
    </location>
    <ligand>
        <name>[2Fe-2S] cluster</name>
        <dbReference type="ChEBI" id="CHEBI:190135"/>
    </ligand>
</feature>
<feature type="binding site" evidence="1">
    <location>
        <position position="149"/>
    </location>
    <ligand>
        <name>[4Fe-4S] cluster</name>
        <dbReference type="ChEBI" id="CHEBI:49883"/>
    </ligand>
</feature>
<feature type="binding site" evidence="1">
    <location>
        <position position="152"/>
    </location>
    <ligand>
        <name>[4Fe-4S] cluster</name>
        <dbReference type="ChEBI" id="CHEBI:49883"/>
    </ligand>
</feature>
<feature type="binding site" evidence="1">
    <location>
        <position position="155"/>
    </location>
    <ligand>
        <name>[4Fe-4S] cluster</name>
        <dbReference type="ChEBI" id="CHEBI:49883"/>
    </ligand>
</feature>
<feature type="binding site" evidence="1">
    <location>
        <position position="159"/>
    </location>
    <ligand>
        <name>[3Fe-4S] cluster</name>
        <dbReference type="ChEBI" id="CHEBI:21137"/>
    </ligand>
</feature>
<feature type="binding site" evidence="1">
    <location>
        <position position="164"/>
    </location>
    <ligand>
        <name>a ubiquinone</name>
        <dbReference type="ChEBI" id="CHEBI:16389"/>
        <note>ligand shared with SdhD subunit</note>
    </ligand>
</feature>
<feature type="binding site" evidence="1">
    <location>
        <position position="206"/>
    </location>
    <ligand>
        <name>[3Fe-4S] cluster</name>
        <dbReference type="ChEBI" id="CHEBI:21137"/>
    </ligand>
</feature>
<feature type="binding site" evidence="1">
    <location>
        <position position="212"/>
    </location>
    <ligand>
        <name>[3Fe-4S] cluster</name>
        <dbReference type="ChEBI" id="CHEBI:21137"/>
    </ligand>
</feature>
<feature type="binding site" evidence="1">
    <location>
        <position position="216"/>
    </location>
    <ligand>
        <name>[4Fe-4S] cluster</name>
        <dbReference type="ChEBI" id="CHEBI:49883"/>
    </ligand>
</feature>
<dbReference type="EC" id="1.3.5.1"/>
<dbReference type="EMBL" id="AE006468">
    <property type="protein sequence ID" value="AAL19679.1"/>
    <property type="status" value="ALT_INIT"/>
    <property type="molecule type" value="Genomic_DNA"/>
</dbReference>
<dbReference type="RefSeq" id="NP_459720.1">
    <property type="nucleotide sequence ID" value="NC_003197.2"/>
</dbReference>
<dbReference type="RefSeq" id="WP_000976880.1">
    <property type="nucleotide sequence ID" value="NC_003197.2"/>
</dbReference>
<dbReference type="SMR" id="Q8ZQU2"/>
<dbReference type="STRING" id="99287.STM0735"/>
<dbReference type="PaxDb" id="99287-STM0735"/>
<dbReference type="GeneID" id="1252255"/>
<dbReference type="KEGG" id="stm:STM0735"/>
<dbReference type="PATRIC" id="fig|99287.12.peg.767"/>
<dbReference type="HOGENOM" id="CLU_044838_0_2_6"/>
<dbReference type="OMA" id="DGQYFGP"/>
<dbReference type="PhylomeDB" id="Q8ZQU2"/>
<dbReference type="UniPathway" id="UPA00223">
    <property type="reaction ID" value="UER01005"/>
</dbReference>
<dbReference type="Proteomes" id="UP000001014">
    <property type="component" value="Chromosome"/>
</dbReference>
<dbReference type="GO" id="GO:0051537">
    <property type="term" value="F:2 iron, 2 sulfur cluster binding"/>
    <property type="evidence" value="ECO:0007669"/>
    <property type="project" value="UniProtKB-KW"/>
</dbReference>
<dbReference type="GO" id="GO:0051538">
    <property type="term" value="F:3 iron, 4 sulfur cluster binding"/>
    <property type="evidence" value="ECO:0007669"/>
    <property type="project" value="UniProtKB-KW"/>
</dbReference>
<dbReference type="GO" id="GO:0051539">
    <property type="term" value="F:4 iron, 4 sulfur cluster binding"/>
    <property type="evidence" value="ECO:0007669"/>
    <property type="project" value="UniProtKB-KW"/>
</dbReference>
<dbReference type="GO" id="GO:0009055">
    <property type="term" value="F:electron transfer activity"/>
    <property type="evidence" value="ECO:0007669"/>
    <property type="project" value="InterPro"/>
</dbReference>
<dbReference type="GO" id="GO:0046872">
    <property type="term" value="F:metal ion binding"/>
    <property type="evidence" value="ECO:0007669"/>
    <property type="project" value="UniProtKB-KW"/>
</dbReference>
<dbReference type="GO" id="GO:0008177">
    <property type="term" value="F:succinate dehydrogenase (quinone) activity"/>
    <property type="evidence" value="ECO:0007669"/>
    <property type="project" value="UniProtKB-EC"/>
</dbReference>
<dbReference type="GO" id="GO:0009060">
    <property type="term" value="P:aerobic respiration"/>
    <property type="evidence" value="ECO:0000318"/>
    <property type="project" value="GO_Central"/>
</dbReference>
<dbReference type="GO" id="GO:0022904">
    <property type="term" value="P:respiratory electron transport chain"/>
    <property type="evidence" value="ECO:0000318"/>
    <property type="project" value="GO_Central"/>
</dbReference>
<dbReference type="GO" id="GO:0006099">
    <property type="term" value="P:tricarboxylic acid cycle"/>
    <property type="evidence" value="ECO:0007669"/>
    <property type="project" value="UniProtKB-UniPathway"/>
</dbReference>
<dbReference type="FunFam" id="3.10.20.30:FF:000004">
    <property type="entry name" value="Succinate dehydrogenase iron-sulfur subunit"/>
    <property type="match status" value="1"/>
</dbReference>
<dbReference type="FunFam" id="1.10.1060.10:FF:000001">
    <property type="entry name" value="Succinate dehydrogenase iron-sulfur subunit SdhB"/>
    <property type="match status" value="1"/>
</dbReference>
<dbReference type="Gene3D" id="3.10.20.30">
    <property type="match status" value="1"/>
</dbReference>
<dbReference type="Gene3D" id="1.10.1060.10">
    <property type="entry name" value="Alpha-helical ferredoxin"/>
    <property type="match status" value="1"/>
</dbReference>
<dbReference type="InterPro" id="IPR036010">
    <property type="entry name" value="2Fe-2S_ferredoxin-like_sf"/>
</dbReference>
<dbReference type="InterPro" id="IPR001041">
    <property type="entry name" value="2Fe-2S_ferredoxin-type"/>
</dbReference>
<dbReference type="InterPro" id="IPR017896">
    <property type="entry name" value="4Fe4S_Fe-S-bd"/>
</dbReference>
<dbReference type="InterPro" id="IPR017900">
    <property type="entry name" value="4Fe4S_Fe_S_CS"/>
</dbReference>
<dbReference type="InterPro" id="IPR012675">
    <property type="entry name" value="Beta-grasp_dom_sf"/>
</dbReference>
<dbReference type="InterPro" id="IPR009051">
    <property type="entry name" value="Helical_ferredxn"/>
</dbReference>
<dbReference type="InterPro" id="IPR050573">
    <property type="entry name" value="SDH/FRD_Iron-Sulfur"/>
</dbReference>
<dbReference type="InterPro" id="IPR004489">
    <property type="entry name" value="Succ_DH/fum_Rdtase_Fe-S"/>
</dbReference>
<dbReference type="InterPro" id="IPR025192">
    <property type="entry name" value="Succ_DH/fum_Rdtase_N"/>
</dbReference>
<dbReference type="NCBIfam" id="TIGR00384">
    <property type="entry name" value="dhsB"/>
    <property type="match status" value="1"/>
</dbReference>
<dbReference type="NCBIfam" id="NF004616">
    <property type="entry name" value="PRK05950.1"/>
    <property type="match status" value="1"/>
</dbReference>
<dbReference type="PANTHER" id="PTHR11921:SF29">
    <property type="entry name" value="SUCCINATE DEHYDROGENASE [UBIQUINONE] IRON-SULFUR SUBUNIT, MITOCHONDRIAL"/>
    <property type="match status" value="1"/>
</dbReference>
<dbReference type="PANTHER" id="PTHR11921">
    <property type="entry name" value="SUCCINATE DEHYDROGENASE IRON-SULFUR PROTEIN"/>
    <property type="match status" value="1"/>
</dbReference>
<dbReference type="Pfam" id="PF13085">
    <property type="entry name" value="Fer2_3"/>
    <property type="match status" value="1"/>
</dbReference>
<dbReference type="Pfam" id="PF13534">
    <property type="entry name" value="Fer4_17"/>
    <property type="match status" value="1"/>
</dbReference>
<dbReference type="SUPFAM" id="SSF54292">
    <property type="entry name" value="2Fe-2S ferredoxin-like"/>
    <property type="match status" value="1"/>
</dbReference>
<dbReference type="SUPFAM" id="SSF46548">
    <property type="entry name" value="alpha-helical ferredoxin"/>
    <property type="match status" value="1"/>
</dbReference>
<dbReference type="PROSITE" id="PS51085">
    <property type="entry name" value="2FE2S_FER_2"/>
    <property type="match status" value="1"/>
</dbReference>
<dbReference type="PROSITE" id="PS00198">
    <property type="entry name" value="4FE4S_FER_1"/>
    <property type="match status" value="1"/>
</dbReference>
<dbReference type="PROSITE" id="PS51379">
    <property type="entry name" value="4FE4S_FER_2"/>
    <property type="match status" value="1"/>
</dbReference>
<evidence type="ECO:0000250" key="1"/>
<evidence type="ECO:0000255" key="2">
    <source>
        <dbReference type="PROSITE-ProRule" id="PRU00465"/>
    </source>
</evidence>
<evidence type="ECO:0000255" key="3">
    <source>
        <dbReference type="PROSITE-ProRule" id="PRU00711"/>
    </source>
</evidence>
<evidence type="ECO:0000305" key="4"/>
<name>SDHB_SALTY</name>
<gene>
    <name type="primary">sdhB</name>
    <name type="ordered locus">STM0735</name>
</gene>
<organism>
    <name type="scientific">Salmonella typhimurium (strain LT2 / SGSC1412 / ATCC 700720)</name>
    <dbReference type="NCBI Taxonomy" id="99287"/>
    <lineage>
        <taxon>Bacteria</taxon>
        <taxon>Pseudomonadati</taxon>
        <taxon>Pseudomonadota</taxon>
        <taxon>Gammaproteobacteria</taxon>
        <taxon>Enterobacterales</taxon>
        <taxon>Enterobacteriaceae</taxon>
        <taxon>Salmonella</taxon>
    </lineage>
</organism>
<accession>Q8ZQU2</accession>
<keyword id="KW-0001">2Fe-2S</keyword>
<keyword id="KW-0003">3Fe-4S</keyword>
<keyword id="KW-0004">4Fe-4S</keyword>
<keyword id="KW-0249">Electron transport</keyword>
<keyword id="KW-0408">Iron</keyword>
<keyword id="KW-0411">Iron-sulfur</keyword>
<keyword id="KW-0479">Metal-binding</keyword>
<keyword id="KW-0560">Oxidoreductase</keyword>
<keyword id="KW-1185">Reference proteome</keyword>
<keyword id="KW-0813">Transport</keyword>
<keyword id="KW-0816">Tricarboxylic acid cycle</keyword>
<sequence>MKLEFSIYRYNPDVDNAPRMQDYTLEGEEGRDMMLLDALIQLKEKDPSLSFRRSCREGVCGSDGLNMNGKNGLACITPISALTQPGKKIVIRPLPGLPVIRDLVVDMGQFYAQYEKIKPYLLNNGQNPPAREHLQMPEQREKLDGLYECILCACCSTSCPSFWWNPDKFIGPAGLLAAYRFLIDSRDTETDSRLEGMSDAFSVFRCHSIMNCVSVCPKGLNPTRAIGHIKSMLLQRSA</sequence>
<comment type="function">
    <text evidence="1">Two distinct, membrane-bound, FAD-containing enzymes are responsible for the catalysis of fumarate and succinate interconversion; the fumarate reductase is used in anaerobic growth, and the succinate dehydrogenase is used in aerobic growth.</text>
</comment>
<comment type="catalytic activity">
    <reaction>
        <text>a quinone + succinate = fumarate + a quinol</text>
        <dbReference type="Rhea" id="RHEA:40523"/>
        <dbReference type="ChEBI" id="CHEBI:24646"/>
        <dbReference type="ChEBI" id="CHEBI:29806"/>
        <dbReference type="ChEBI" id="CHEBI:30031"/>
        <dbReference type="ChEBI" id="CHEBI:132124"/>
        <dbReference type="EC" id="1.3.5.1"/>
    </reaction>
</comment>
<comment type="cofactor">
    <cofactor>
        <name>[2Fe-2S] cluster</name>
        <dbReference type="ChEBI" id="CHEBI:190135"/>
    </cofactor>
    <text>Binds 1 [2Fe-2S] cluster.</text>
</comment>
<comment type="cofactor">
    <cofactor>
        <name>[3Fe-4S] cluster</name>
        <dbReference type="ChEBI" id="CHEBI:21137"/>
    </cofactor>
    <text>Binds 1 [3Fe-4S] cluster.</text>
</comment>
<comment type="cofactor">
    <cofactor>
        <name>[4Fe-4S] cluster</name>
        <dbReference type="ChEBI" id="CHEBI:49883"/>
    </cofactor>
    <text>Binds 1 [4Fe-4S] cluster.</text>
</comment>
<comment type="pathway">
    <text>Carbohydrate metabolism; tricarboxylic acid cycle; fumarate from succinate (bacterial route): step 1/1.</text>
</comment>
<comment type="subunit">
    <text evidence="1">Part of an enzyme complex containing four subunits: a flavoprotein, an iron-sulfur, cytochrome b-556, and a hydrophobic anchor protein.</text>
</comment>
<comment type="similarity">
    <text evidence="4">Belongs to the succinate dehydrogenase/fumarate reductase iron-sulfur protein family.</text>
</comment>
<comment type="sequence caution" evidence="4">
    <conflict type="erroneous initiation">
        <sequence resource="EMBL-CDS" id="AAL19679"/>
    </conflict>
</comment>